<reference key="1">
    <citation type="journal article" date="2010" name="Genome Biol.">
        <title>Structure and dynamics of the pan-genome of Streptococcus pneumoniae and closely related species.</title>
        <authorList>
            <person name="Donati C."/>
            <person name="Hiller N.L."/>
            <person name="Tettelin H."/>
            <person name="Muzzi A."/>
            <person name="Croucher N.J."/>
            <person name="Angiuoli S.V."/>
            <person name="Oggioni M."/>
            <person name="Dunning Hotopp J.C."/>
            <person name="Hu F.Z."/>
            <person name="Riley D.R."/>
            <person name="Covacci A."/>
            <person name="Mitchell T.J."/>
            <person name="Bentley S.D."/>
            <person name="Kilian M."/>
            <person name="Ehrlich G.D."/>
            <person name="Rappuoli R."/>
            <person name="Moxon E.R."/>
            <person name="Masignani V."/>
        </authorList>
    </citation>
    <scope>NUCLEOTIDE SEQUENCE [LARGE SCALE GENOMIC DNA]</scope>
    <source>
        <strain>70585</strain>
    </source>
</reference>
<protein>
    <recommendedName>
        <fullName evidence="1">Ribonuclease 3</fullName>
        <ecNumber evidence="1">3.1.26.3</ecNumber>
    </recommendedName>
    <alternativeName>
        <fullName evidence="1">Ribonuclease III</fullName>
        <shortName evidence="1">RNase III</shortName>
    </alternativeName>
</protein>
<proteinExistence type="inferred from homology"/>
<name>RNC_STRP7</name>
<feature type="chain" id="PRO_1000118934" description="Ribonuclease 3">
    <location>
        <begin position="1"/>
        <end position="232"/>
    </location>
</feature>
<feature type="domain" description="RNase III" evidence="1">
    <location>
        <begin position="5"/>
        <end position="134"/>
    </location>
</feature>
<feature type="domain" description="DRBM" evidence="1">
    <location>
        <begin position="160"/>
        <end position="229"/>
    </location>
</feature>
<feature type="active site" evidence="1">
    <location>
        <position position="51"/>
    </location>
</feature>
<feature type="active site" evidence="1">
    <location>
        <position position="123"/>
    </location>
</feature>
<feature type="binding site" evidence="1">
    <location>
        <position position="47"/>
    </location>
    <ligand>
        <name>Mg(2+)</name>
        <dbReference type="ChEBI" id="CHEBI:18420"/>
    </ligand>
</feature>
<feature type="binding site" evidence="1">
    <location>
        <position position="120"/>
    </location>
    <ligand>
        <name>Mg(2+)</name>
        <dbReference type="ChEBI" id="CHEBI:18420"/>
    </ligand>
</feature>
<feature type="binding site" evidence="1">
    <location>
        <position position="123"/>
    </location>
    <ligand>
        <name>Mg(2+)</name>
        <dbReference type="ChEBI" id="CHEBI:18420"/>
    </ligand>
</feature>
<accession>C1C7M6</accession>
<organism>
    <name type="scientific">Streptococcus pneumoniae (strain 70585)</name>
    <dbReference type="NCBI Taxonomy" id="488221"/>
    <lineage>
        <taxon>Bacteria</taxon>
        <taxon>Bacillati</taxon>
        <taxon>Bacillota</taxon>
        <taxon>Bacilli</taxon>
        <taxon>Lactobacillales</taxon>
        <taxon>Streptococcaceae</taxon>
        <taxon>Streptococcus</taxon>
    </lineage>
</organism>
<sequence length="232" mass="26198">MKELQTVLKNHFAIEFTDKKLLETAFTHTSYANEHRLLKISHNERLEFLGDAVLQLLISEYLYKKYPKKPEGDLSKLRAMIVREESLAGFARDCQFDQFIKLGKGEEKSGGRNRDTILGDAFEAFLGALLLDKDVAKVKEFIYQVMIPKVEAGEFEMITDYKTHLQELLQVNGDVAIRYQVISETGPAHDKVFDVEVLVEGKSIGQGQGRSKKLAEQEAAKNAVEKGLDSCI</sequence>
<dbReference type="EC" id="3.1.26.3" evidence="1"/>
<dbReference type="EMBL" id="CP000918">
    <property type="protein sequence ID" value="ACO17867.1"/>
    <property type="molecule type" value="Genomic_DNA"/>
</dbReference>
<dbReference type="RefSeq" id="WP_000661498.1">
    <property type="nucleotide sequence ID" value="NC_012468.1"/>
</dbReference>
<dbReference type="SMR" id="C1C7M6"/>
<dbReference type="KEGG" id="snm:SP70585_1310"/>
<dbReference type="HOGENOM" id="CLU_000907_1_3_9"/>
<dbReference type="Proteomes" id="UP000002211">
    <property type="component" value="Chromosome"/>
</dbReference>
<dbReference type="GO" id="GO:0005737">
    <property type="term" value="C:cytoplasm"/>
    <property type="evidence" value="ECO:0007669"/>
    <property type="project" value="UniProtKB-SubCell"/>
</dbReference>
<dbReference type="GO" id="GO:0003725">
    <property type="term" value="F:double-stranded RNA binding"/>
    <property type="evidence" value="ECO:0007669"/>
    <property type="project" value="TreeGrafter"/>
</dbReference>
<dbReference type="GO" id="GO:0046872">
    <property type="term" value="F:metal ion binding"/>
    <property type="evidence" value="ECO:0007669"/>
    <property type="project" value="UniProtKB-KW"/>
</dbReference>
<dbReference type="GO" id="GO:0004525">
    <property type="term" value="F:ribonuclease III activity"/>
    <property type="evidence" value="ECO:0007669"/>
    <property type="project" value="UniProtKB-UniRule"/>
</dbReference>
<dbReference type="GO" id="GO:0019843">
    <property type="term" value="F:rRNA binding"/>
    <property type="evidence" value="ECO:0007669"/>
    <property type="project" value="UniProtKB-KW"/>
</dbReference>
<dbReference type="GO" id="GO:0006397">
    <property type="term" value="P:mRNA processing"/>
    <property type="evidence" value="ECO:0007669"/>
    <property type="project" value="UniProtKB-UniRule"/>
</dbReference>
<dbReference type="GO" id="GO:0010468">
    <property type="term" value="P:regulation of gene expression"/>
    <property type="evidence" value="ECO:0007669"/>
    <property type="project" value="TreeGrafter"/>
</dbReference>
<dbReference type="GO" id="GO:0006364">
    <property type="term" value="P:rRNA processing"/>
    <property type="evidence" value="ECO:0007669"/>
    <property type="project" value="UniProtKB-UniRule"/>
</dbReference>
<dbReference type="GO" id="GO:0008033">
    <property type="term" value="P:tRNA processing"/>
    <property type="evidence" value="ECO:0007669"/>
    <property type="project" value="UniProtKB-KW"/>
</dbReference>
<dbReference type="CDD" id="cd10845">
    <property type="entry name" value="DSRM_RNAse_III_family"/>
    <property type="match status" value="1"/>
</dbReference>
<dbReference type="CDD" id="cd00593">
    <property type="entry name" value="RIBOc"/>
    <property type="match status" value="1"/>
</dbReference>
<dbReference type="FunFam" id="1.10.1520.10:FF:000001">
    <property type="entry name" value="Ribonuclease 3"/>
    <property type="match status" value="1"/>
</dbReference>
<dbReference type="FunFam" id="3.30.160.20:FF:000003">
    <property type="entry name" value="Ribonuclease 3"/>
    <property type="match status" value="1"/>
</dbReference>
<dbReference type="Gene3D" id="3.30.160.20">
    <property type="match status" value="1"/>
</dbReference>
<dbReference type="Gene3D" id="1.10.1520.10">
    <property type="entry name" value="Ribonuclease III domain"/>
    <property type="match status" value="1"/>
</dbReference>
<dbReference type="HAMAP" id="MF_00104">
    <property type="entry name" value="RNase_III"/>
    <property type="match status" value="1"/>
</dbReference>
<dbReference type="InterPro" id="IPR014720">
    <property type="entry name" value="dsRBD_dom"/>
</dbReference>
<dbReference type="InterPro" id="IPR011907">
    <property type="entry name" value="RNase_III"/>
</dbReference>
<dbReference type="InterPro" id="IPR000999">
    <property type="entry name" value="RNase_III_dom"/>
</dbReference>
<dbReference type="InterPro" id="IPR036389">
    <property type="entry name" value="RNase_III_sf"/>
</dbReference>
<dbReference type="NCBIfam" id="TIGR02191">
    <property type="entry name" value="RNaseIII"/>
    <property type="match status" value="1"/>
</dbReference>
<dbReference type="PANTHER" id="PTHR11207:SF0">
    <property type="entry name" value="RIBONUCLEASE 3"/>
    <property type="match status" value="1"/>
</dbReference>
<dbReference type="PANTHER" id="PTHR11207">
    <property type="entry name" value="RIBONUCLEASE III"/>
    <property type="match status" value="1"/>
</dbReference>
<dbReference type="Pfam" id="PF00035">
    <property type="entry name" value="dsrm"/>
    <property type="match status" value="1"/>
</dbReference>
<dbReference type="Pfam" id="PF14622">
    <property type="entry name" value="Ribonucleas_3_3"/>
    <property type="match status" value="1"/>
</dbReference>
<dbReference type="SMART" id="SM00358">
    <property type="entry name" value="DSRM"/>
    <property type="match status" value="1"/>
</dbReference>
<dbReference type="SMART" id="SM00535">
    <property type="entry name" value="RIBOc"/>
    <property type="match status" value="1"/>
</dbReference>
<dbReference type="SUPFAM" id="SSF54768">
    <property type="entry name" value="dsRNA-binding domain-like"/>
    <property type="match status" value="1"/>
</dbReference>
<dbReference type="SUPFAM" id="SSF69065">
    <property type="entry name" value="RNase III domain-like"/>
    <property type="match status" value="1"/>
</dbReference>
<dbReference type="PROSITE" id="PS50137">
    <property type="entry name" value="DS_RBD"/>
    <property type="match status" value="1"/>
</dbReference>
<dbReference type="PROSITE" id="PS00517">
    <property type="entry name" value="RNASE_3_1"/>
    <property type="match status" value="1"/>
</dbReference>
<dbReference type="PROSITE" id="PS50142">
    <property type="entry name" value="RNASE_3_2"/>
    <property type="match status" value="1"/>
</dbReference>
<gene>
    <name evidence="1" type="primary">rnc</name>
    <name type="ordered locus">SP70585_1310</name>
</gene>
<keyword id="KW-0963">Cytoplasm</keyword>
<keyword id="KW-0255">Endonuclease</keyword>
<keyword id="KW-0378">Hydrolase</keyword>
<keyword id="KW-0460">Magnesium</keyword>
<keyword id="KW-0479">Metal-binding</keyword>
<keyword id="KW-0507">mRNA processing</keyword>
<keyword id="KW-0540">Nuclease</keyword>
<keyword id="KW-0694">RNA-binding</keyword>
<keyword id="KW-0698">rRNA processing</keyword>
<keyword id="KW-0699">rRNA-binding</keyword>
<keyword id="KW-0819">tRNA processing</keyword>
<evidence type="ECO:0000255" key="1">
    <source>
        <dbReference type="HAMAP-Rule" id="MF_00104"/>
    </source>
</evidence>
<comment type="function">
    <text evidence="1">Digests double-stranded RNA. Involved in the processing of primary rRNA transcript to yield the immediate precursors to the large and small rRNAs (23S and 16S). Processes some mRNAs, and tRNAs when they are encoded in the rRNA operon. Processes pre-crRNA and tracrRNA of type II CRISPR loci if present in the organism.</text>
</comment>
<comment type="catalytic activity">
    <reaction evidence="1">
        <text>Endonucleolytic cleavage to 5'-phosphomonoester.</text>
        <dbReference type="EC" id="3.1.26.3"/>
    </reaction>
</comment>
<comment type="cofactor">
    <cofactor evidence="1">
        <name>Mg(2+)</name>
        <dbReference type="ChEBI" id="CHEBI:18420"/>
    </cofactor>
</comment>
<comment type="subunit">
    <text evidence="1">Homodimer.</text>
</comment>
<comment type="subcellular location">
    <subcellularLocation>
        <location evidence="1">Cytoplasm</location>
    </subcellularLocation>
</comment>
<comment type="similarity">
    <text evidence="1">Belongs to the ribonuclease III family.</text>
</comment>